<feature type="chain" id="PRO_0000085279" description="Protein Rev">
    <location>
        <begin position="1"/>
        <end position="116"/>
    </location>
</feature>
<feature type="region of interest" description="Homomultimerization" evidence="1">
    <location>
        <begin position="18"/>
        <end position="26"/>
    </location>
</feature>
<feature type="region of interest" description="Disordered" evidence="2">
    <location>
        <begin position="21"/>
        <end position="49"/>
    </location>
</feature>
<feature type="region of interest" description="Disordered" evidence="2">
    <location>
        <begin position="92"/>
        <end position="116"/>
    </location>
</feature>
<feature type="short sequence motif" description="Nuclear localization signal and RNA-binding (RRE)" evidence="1">
    <location>
        <begin position="34"/>
        <end position="50"/>
    </location>
</feature>
<feature type="short sequence motif" description="Nuclear export signal and binding to XPO1" evidence="1">
    <location>
        <begin position="73"/>
        <end position="84"/>
    </location>
</feature>
<feature type="compositionally biased region" description="Basic residues" evidence="2">
    <location>
        <begin position="36"/>
        <end position="47"/>
    </location>
</feature>
<feature type="modified residue" description="Phosphoserine; by host CK2" evidence="1 5">
    <location>
        <position position="5"/>
    </location>
</feature>
<feature type="modified residue" description="Phosphoserine; by host CK2" evidence="1 5">
    <location>
        <position position="8"/>
    </location>
</feature>
<feature type="modified residue" description="Phosphoserine; by host" evidence="1">
    <location>
        <position position="92"/>
    </location>
</feature>
<feature type="modified residue" description="Phosphoserine; by host" evidence="1">
    <location>
        <position position="99"/>
    </location>
</feature>
<feature type="turn" evidence="6">
    <location>
        <begin position="45"/>
        <end position="48"/>
    </location>
</feature>
<keyword id="KW-0002">3D-structure</keyword>
<keyword id="KW-0014">AIDS</keyword>
<keyword id="KW-1035">Host cytoplasm</keyword>
<keyword id="KW-1048">Host nucleus</keyword>
<keyword id="KW-0945">Host-virus interaction</keyword>
<keyword id="KW-0488">Methylation</keyword>
<keyword id="KW-0509">mRNA transport</keyword>
<keyword id="KW-0597">Phosphoprotein</keyword>
<keyword id="KW-1185">Reference proteome</keyword>
<keyword id="KW-0694">RNA-binding</keyword>
<keyword id="KW-0813">Transport</keyword>
<comment type="function">
    <text evidence="1">Escorts unspliced or incompletely spliced viral pre-mRNAs (late transcripts) out of the nucleus of infected cells. These pre-mRNAs carry a recognition sequence called Rev responsive element (RRE) located in the env gene, that is not present in fully spliced viral mRNAs (early transcripts). This function is essential since most viral proteins are translated from unspliced or partially spliced pre-mRNAs which cannot exit the nucleus by the pathway used by fully processed cellular mRNAs. Rev itself is translated from a fully spliced mRNA that readily exits the nucleus. Rev's nuclear localization signal (NLS) binds directly to KPNB1/Importin beta-1 without previous binding to KPNA1/Importin alpha-1. KPNB1 binds to the GDP bound form of RAN (Ran-GDP) and targets Rev to the nucleus. In the nucleus, the conversion from Ran-GDP to Ran-GTP dissociates Rev from KPNB1 and allows Rev's binding to the RRE in viral pre-mRNAs. Rev multimerization on the RRE via cooperative assembly exposes its nuclear export signal (NES) to the surface. Rev can then form a complex with XPO1/CRM1 and Ran-GTP, leading to nuclear export of the complex. Conversion from Ran-GTP to Ran-GDP mediates dissociation of the Rev/RRE/XPO1/RAN complex, so that Rev can return to the nucleus for a subsequent round of export. Beside KPNB1, also seems to interact with TNPO1/Transportin-1, RANBP5/IPO5 and IPO7/RANBP7 for nuclear import. The nucleoporin-like HRB/RIP is an essential cofactor that probably indirectly interacts with Rev to release HIV RNAs from the perinuclear region to the cytoplasm.</text>
</comment>
<comment type="subunit">
    <text evidence="1">Homomultimer; when bound to the RRE. Multimeric assembly is essential for activity and may involve XPO1. Binds to human KPNB1, XPO1, TNPO1, RANBP5 and IPO7. Interacts with the viral Integrase. Interacts with human KHDRBS1. Interacts with human NAP1; this interaction decreases Rev multimerization and stimulates its activity. Interacts with human DEAD-box helicases DDX3 and DDX24; these interactions may serve for viral RNA export to the cytoplasm and packaging, respectively. Interacts with human PSIP1; this interaction may inhibit HIV-1 DNA integration by promoting dissociation of the Integrase-LEDGF/p75 complex.</text>
</comment>
<comment type="interaction">
    <interactant intactId="EBI-6164309">
        <id>P04618</id>
    </interactant>
    <interactant intactId="EBI-6164309">
        <id>P04618</id>
        <label>rev</label>
    </interactant>
    <organismsDiffer>false</organismsDiffer>
    <experiments>3</experiments>
</comment>
<comment type="interaction">
    <interactant intactId="EBI-6164309">
        <id>P04618</id>
    </interactant>
    <interactant intactId="EBI-5454898">
        <id>Q96BP2</id>
        <label>CHCHD1</label>
    </interactant>
    <organismsDiffer>true</organismsDiffer>
    <experiments>3</experiments>
</comment>
<comment type="interaction">
    <interactant intactId="EBI-6164309">
        <id>P04618</id>
    </interactant>
    <interactant intactId="EBI-15532186">
        <id>Q92499-1</id>
        <label>DDX1</label>
    </interactant>
    <organismsDiffer>true</organismsDiffer>
    <experiments>6</experiments>
</comment>
<comment type="interaction">
    <interactant intactId="EBI-6164309">
        <id>P04618</id>
    </interactant>
    <interactant intactId="EBI-351962">
        <id>P17844</id>
        <label>DDX5</label>
    </interactant>
    <organismsDiffer>true</organismsDiffer>
    <experiments>2</experiments>
</comment>
<comment type="interaction">
    <interactant intactId="EBI-6164309">
        <id>P04618</id>
    </interactant>
    <interactant intactId="EBI-713456">
        <id>Q13123</id>
        <label>IK</label>
    </interactant>
    <organismsDiffer>true</organismsDiffer>
    <experiments>3</experiments>
</comment>
<comment type="interaction">
    <interactant intactId="EBI-6164309">
        <id>P04618</id>
    </interactant>
    <interactant intactId="EBI-2691489">
        <id>Q8WV92</id>
        <label>MITD1</label>
    </interactant>
    <organismsDiffer>true</organismsDiffer>
    <experiments>2</experiments>
</comment>
<comment type="interaction">
    <interactant intactId="EBI-6164309">
        <id>P04618</id>
    </interactant>
    <interactant intactId="EBI-721385">
        <id>P82933</id>
        <label>MRPS9</label>
    </interactant>
    <organismsDiffer>true</organismsDiffer>
    <experiments>2</experiments>
</comment>
<comment type="interaction">
    <interactant intactId="EBI-6164309">
        <id>P04618</id>
    </interactant>
    <interactant intactId="EBI-1045046">
        <id>Q92621</id>
        <label>NUP205</label>
    </interactant>
    <organismsDiffer>true</organismsDiffer>
    <experiments>2</experiments>
</comment>
<comment type="interaction">
    <interactant intactId="EBI-6164309">
        <id>P04618</id>
    </interactant>
    <interactant intactId="EBI-353460">
        <id>Q04837</id>
        <label>SSBP1</label>
    </interactant>
    <organismsDiffer>true</organismsDiffer>
    <experiments>3</experiments>
</comment>
<comment type="interaction">
    <interactant intactId="EBI-6164309">
        <id>P04618</id>
    </interactant>
    <interactant intactId="EBI-355867">
        <id>O14980</id>
        <label>XPO1</label>
    </interactant>
    <organismsDiffer>true</organismsDiffer>
    <experiments>2</experiments>
</comment>
<comment type="subcellular location">
    <subcellularLocation>
        <location evidence="1">Host nucleus</location>
        <location evidence="1">Host nucleolus</location>
    </subcellularLocation>
    <subcellularLocation>
        <location evidence="1">Host cytoplasm</location>
    </subcellularLocation>
    <text evidence="1">The presence of both nuclear import and nuclear export signals leads to continuous shuttling between the nucleus and cytoplasm.</text>
</comment>
<comment type="domain">
    <text evidence="1">The RNA-binding motif binds to the RRE, a 240 bp stem-and-loop structure present in incompletely spliced viral pre-mRNAs. This region also contains the NLS which mediates nuclear localization via KPNB1 binding and, when the N-terminal sequence is present, nucleolar targeting. These overlapping functions prevent Rev bound to RRE from undesirable return to the nucleus. When Rev binds the RRE, the NLS becomes masked while the NES remains accessible. The leucine-rich NES mediates binding to human XPO1.</text>
</comment>
<comment type="PTM">
    <text evidence="1">Asymmetrically arginine dimethylated at one site by host PRMT6. Methylation impairs the RNA-binding activity and export of viral RNA from the nucleus to the cytoplasm.</text>
</comment>
<comment type="PTM">
    <text evidence="1 3 4 5">Phosphorylated by protein kinase CK2. Presence of, and maybe binding to the N-terminus of the regulatory beta subunit of CK2 is necessary for CK2-mediated Rev's phosphorylation.</text>
</comment>
<comment type="miscellaneous">
    <text evidence="1">HIV-1 lineages are divided in three main groups, M (for Major), O (for Outlier), and N (for New, or Non-M, Non-O). The vast majority of strains found worldwide belong to the group M. Group O seems to be endemic to and largely confined to Cameroon and neighboring countries in West Central Africa, where these viruses represent a small minority of HIV-1 strains. The group N is represented by a limited number of isolates from Cameroonian persons. The group M is further subdivided in 9 clades or subtypes (A to D, F to H, J and K).</text>
</comment>
<comment type="similarity">
    <text evidence="1">Belongs to the HIV-1 REV protein family.</text>
</comment>
<organismHost>
    <name type="scientific">Homo sapiens</name>
    <name type="common">Human</name>
    <dbReference type="NCBI Taxonomy" id="9606"/>
</organismHost>
<accession>P04618</accession>
<sequence>MAGRSGDSDEELIRTVRLIKLLYQSNPPPNPEGTRQARRNRRRRWRERQRQIHSISERILGTYLGRSAEPVPLQLPPLERLTLDCNEDCGTSGTQGVGSPQILVESPTVLESGTKE</sequence>
<reference key="1">
    <citation type="journal article" date="1987" name="AIDS Res. Hum. Retroviruses">
        <title>Complete nucleotide sequences of functional clones of the AIDS virus.</title>
        <authorList>
            <person name="Ratner L."/>
            <person name="Fisher A."/>
            <person name="Jagodzinski L.L."/>
            <person name="Mitsuya H."/>
            <person name="Liou R.-S."/>
            <person name="Gallo R.C."/>
            <person name="Wong-Staal F."/>
        </authorList>
    </citation>
    <scope>NUCLEOTIDE SEQUENCE [GENOMIC RNA]</scope>
</reference>
<reference key="2">
    <citation type="journal article" date="1996" name="Biochem. Biophys. Res. Commun.">
        <title>Phosphorylation of HIV-1 Rev protein: implication of protein kinase CK2 and pro-directed kinases.</title>
        <authorList>
            <person name="Meggio F."/>
            <person name="D'Agostino D.M."/>
            <person name="Ciminale V."/>
            <person name="Chieco-Bianchi L."/>
            <person name="Pinna L.A."/>
        </authorList>
    </citation>
    <scope>PHOSPHORYLATION AT SER-5 AND SER-8 BY CK2</scope>
</reference>
<reference key="3">
    <citation type="journal article" date="2000" name="FEBS Lett.">
        <title>Unique features of HIV-1 Rev protein phosphorylation by protein kinase CK2 ('casein kinase-2').</title>
        <authorList>
            <person name="Marin O."/>
            <person name="Sarno S."/>
            <person name="Boschetti M."/>
            <person name="Pagano M.A."/>
            <person name="Meggio F."/>
            <person name="Ciminale V."/>
            <person name="D'Agostino D.M."/>
            <person name="Pinna L.A."/>
        </authorList>
    </citation>
    <scope>PHOSPHORYLATION BY CK2</scope>
</reference>
<reference key="4">
    <citation type="journal article" date="2001" name="Mol. Cell. Biochem.">
        <title>HIV-1 Rev transactivator: a beta-subunit directed substrate and effector of protein kinase CK2.</title>
        <authorList>
            <person name="Meggio F."/>
            <person name="Marin O."/>
            <person name="Boschetti M."/>
            <person name="Sarno S."/>
            <person name="Pinna L.A."/>
        </authorList>
    </citation>
    <scope>PHOSPHORYLATION BY CK2</scope>
</reference>
<reference key="5">
    <citation type="journal article" date="2004" name="Virology">
        <title>A DEAD box protein facilitates HIV-1 replication as a cellular co-factor of Rev.</title>
        <authorList>
            <person name="Fang J."/>
            <person name="Kubota S."/>
            <person name="Yang B."/>
            <person name="Zhou N."/>
            <person name="Zhang H."/>
            <person name="Godbout R."/>
            <person name="Pomerantz R.J."/>
        </authorList>
    </citation>
    <scope>INTERACTION WITH DDX1</scope>
</reference>
<reference key="6">
    <citation type="journal article" date="1999" name="Arch. Biochem. Biophys.">
        <title>The ins and outs of HIV Rev.</title>
        <authorList>
            <person name="Hope T.J."/>
        </authorList>
    </citation>
    <scope>REVIEW</scope>
</reference>
<dbReference type="EMBL" id="K03455">
    <property type="protein sequence ID" value="AAB50257.1"/>
    <property type="molecule type" value="Genomic_RNA"/>
</dbReference>
<dbReference type="PIR" id="JC4968">
    <property type="entry name" value="JC4968"/>
</dbReference>
<dbReference type="RefSeq" id="NP_057854.1">
    <property type="nucleotide sequence ID" value="NC_001802.1"/>
</dbReference>
<dbReference type="PDB" id="6HIP">
    <property type="method" value="X-ray"/>
    <property type="resolution" value="1.20 A"/>
    <property type="chains" value="C=41-49"/>
</dbReference>
<dbReference type="PDB" id="7JYA">
    <property type="method" value="X-ray"/>
    <property type="resolution" value="2.46 A"/>
    <property type="chains" value="D/E/F=40-50"/>
</dbReference>
<dbReference type="PDBsum" id="6HIP"/>
<dbReference type="PDBsum" id="7JYA"/>
<dbReference type="EMDB" id="EMD-6231"/>
<dbReference type="SMR" id="P04618"/>
<dbReference type="BioGRID" id="1205542">
    <property type="interactions" value="228"/>
</dbReference>
<dbReference type="DIP" id="DIP-61717N"/>
<dbReference type="IntAct" id="P04618">
    <property type="interactions" value="25"/>
</dbReference>
<dbReference type="BindingDB" id="P04618"/>
<dbReference type="ChEMBL" id="CHEMBL1293282"/>
<dbReference type="iPTMnet" id="P04618"/>
<dbReference type="ABCD" id="P04618">
    <property type="antibodies" value="1 sequenced antibody"/>
</dbReference>
<dbReference type="GeneID" id="155908"/>
<dbReference type="KEGG" id="vg:155908"/>
<dbReference type="Reactome" id="R-HSA-162585">
    <property type="pathway name" value="Uncoating of the HIV Virion"/>
</dbReference>
<dbReference type="Reactome" id="R-HSA-162588">
    <property type="pathway name" value="Budding and maturation of HIV virion"/>
</dbReference>
<dbReference type="Reactome" id="R-HSA-162592">
    <property type="pathway name" value="Integration of provirus"/>
</dbReference>
<dbReference type="Reactome" id="R-HSA-162594">
    <property type="pathway name" value="Early Phase of HIV Life Cycle"/>
</dbReference>
<dbReference type="Reactome" id="R-HSA-164516">
    <property type="pathway name" value="Minus-strand DNA synthesis"/>
</dbReference>
<dbReference type="Reactome" id="R-HSA-164525">
    <property type="pathway name" value="Plus-strand DNA synthesis"/>
</dbReference>
<dbReference type="Reactome" id="R-HSA-164843">
    <property type="pathway name" value="2-LTR circle formation"/>
</dbReference>
<dbReference type="Reactome" id="R-HSA-165054">
    <property type="pathway name" value="Rev-mediated nuclear export of HIV RNA"/>
</dbReference>
<dbReference type="Reactome" id="R-HSA-173107">
    <property type="pathway name" value="Binding and entry of HIV virion"/>
</dbReference>
<dbReference type="Reactome" id="R-HSA-175474">
    <property type="pathway name" value="Assembly Of The HIV Virion"/>
</dbReference>
<dbReference type="Reactome" id="R-HSA-175567">
    <property type="pathway name" value="Integration of viral DNA into host genomic DNA"/>
</dbReference>
<dbReference type="Reactome" id="R-HSA-177539">
    <property type="pathway name" value="Autointegration results in viral DNA circles"/>
</dbReference>
<dbReference type="Reactome" id="R-HSA-180689">
    <property type="pathway name" value="APOBEC3G mediated resistance to HIV-1 infection"/>
</dbReference>
<dbReference type="Reactome" id="R-HSA-180746">
    <property type="pathway name" value="Nuclear import of Rev protein"/>
</dbReference>
<dbReference type="Reactome" id="R-HSA-180910">
    <property type="pathway name" value="Vpr-mediated nuclear import of PICs"/>
</dbReference>
<dbReference type="PRO" id="PR:P04618"/>
<dbReference type="Proteomes" id="UP000002241">
    <property type="component" value="Segment"/>
</dbReference>
<dbReference type="GO" id="GO:0030430">
    <property type="term" value="C:host cell cytoplasm"/>
    <property type="evidence" value="ECO:0007669"/>
    <property type="project" value="UniProtKB-SubCell"/>
</dbReference>
<dbReference type="GO" id="GO:0044196">
    <property type="term" value="C:host cell nucleolus"/>
    <property type="evidence" value="ECO:0007669"/>
    <property type="project" value="UniProtKB-SubCell"/>
</dbReference>
<dbReference type="GO" id="GO:0003700">
    <property type="term" value="F:DNA-binding transcription factor activity"/>
    <property type="evidence" value="ECO:0007669"/>
    <property type="project" value="UniProtKB-UniRule"/>
</dbReference>
<dbReference type="GO" id="GO:0042802">
    <property type="term" value="F:identical protein binding"/>
    <property type="evidence" value="ECO:0000353"/>
    <property type="project" value="IntAct"/>
</dbReference>
<dbReference type="GO" id="GO:0003723">
    <property type="term" value="F:RNA binding"/>
    <property type="evidence" value="ECO:0007669"/>
    <property type="project" value="UniProtKB-UniRule"/>
</dbReference>
<dbReference type="GO" id="GO:0051028">
    <property type="term" value="P:mRNA transport"/>
    <property type="evidence" value="ECO:0007669"/>
    <property type="project" value="UniProtKB-UniRule"/>
</dbReference>
<dbReference type="GO" id="GO:0016032">
    <property type="term" value="P:viral process"/>
    <property type="evidence" value="ECO:0007669"/>
    <property type="project" value="UniProtKB-UniRule"/>
</dbReference>
<dbReference type="Gene3D" id="6.10.140.630">
    <property type="match status" value="1"/>
</dbReference>
<dbReference type="HAMAP" id="MF_04077">
    <property type="entry name" value="REV_HIV1"/>
    <property type="match status" value="1"/>
</dbReference>
<dbReference type="InterPro" id="IPR000625">
    <property type="entry name" value="REV_protein"/>
</dbReference>
<dbReference type="Pfam" id="PF00424">
    <property type="entry name" value="REV"/>
    <property type="match status" value="1"/>
</dbReference>
<protein>
    <recommendedName>
        <fullName evidence="1">Protein Rev</fullName>
    </recommendedName>
    <alternativeName>
        <fullName evidence="1">ART/TRS</fullName>
    </alternativeName>
    <alternativeName>
        <fullName evidence="1">Anti-repression transactivator</fullName>
    </alternativeName>
    <alternativeName>
        <fullName evidence="1">Regulator of expression of viral proteins</fullName>
    </alternativeName>
</protein>
<name>REV_HV1H2</name>
<proteinExistence type="evidence at protein level"/>
<evidence type="ECO:0000255" key="1">
    <source>
        <dbReference type="HAMAP-Rule" id="MF_04077"/>
    </source>
</evidence>
<evidence type="ECO:0000256" key="2">
    <source>
        <dbReference type="SAM" id="MobiDB-lite"/>
    </source>
</evidence>
<evidence type="ECO:0000269" key="3">
    <source>
    </source>
</evidence>
<evidence type="ECO:0000269" key="4">
    <source>
    </source>
</evidence>
<evidence type="ECO:0000269" key="5">
    <source>
    </source>
</evidence>
<evidence type="ECO:0007829" key="6">
    <source>
        <dbReference type="PDB" id="7JYA"/>
    </source>
</evidence>
<gene>
    <name evidence="1" type="primary">rev</name>
</gene>
<organism>
    <name type="scientific">Human immunodeficiency virus type 1 group M subtype B (isolate HXB2)</name>
    <name type="common">HIV-1</name>
    <dbReference type="NCBI Taxonomy" id="11706"/>
    <lineage>
        <taxon>Viruses</taxon>
        <taxon>Riboviria</taxon>
        <taxon>Pararnavirae</taxon>
        <taxon>Artverviricota</taxon>
        <taxon>Revtraviricetes</taxon>
        <taxon>Ortervirales</taxon>
        <taxon>Retroviridae</taxon>
        <taxon>Orthoretrovirinae</taxon>
        <taxon>Lentivirus</taxon>
        <taxon>Human immunodeficiency virus type 1</taxon>
    </lineage>
</organism>